<name>RNAS1_URARU</name>
<gene>
    <name type="primary">RNASE1</name>
</gene>
<organism>
    <name type="scientific">Uranomys ruddi</name>
    <name type="common">White-bellied brush-furred rat</name>
    <name type="synonym">Rudd's mouse</name>
    <dbReference type="NCBI Taxonomy" id="41272"/>
    <lineage>
        <taxon>Eukaryota</taxon>
        <taxon>Metazoa</taxon>
        <taxon>Chordata</taxon>
        <taxon>Craniata</taxon>
        <taxon>Vertebrata</taxon>
        <taxon>Euteleostomi</taxon>
        <taxon>Mammalia</taxon>
        <taxon>Eutheria</taxon>
        <taxon>Euarchontoglires</taxon>
        <taxon>Glires</taxon>
        <taxon>Rodentia</taxon>
        <taxon>Myomorpha</taxon>
        <taxon>Muroidea</taxon>
        <taxon>Muridae</taxon>
        <taxon>Deomyinae</taxon>
        <taxon>Uranomys</taxon>
    </lineage>
</organism>
<proteinExistence type="evidence at transcript level"/>
<evidence type="ECO:0000250" key="1"/>
<evidence type="ECO:0000305" key="2"/>
<keyword id="KW-1015">Disulfide bond</keyword>
<keyword id="KW-0255">Endonuclease</keyword>
<keyword id="KW-0378">Hydrolase</keyword>
<keyword id="KW-0456">Lyase</keyword>
<keyword id="KW-0540">Nuclease</keyword>
<keyword id="KW-0964">Secreted</keyword>
<keyword id="KW-0732">Signal</keyword>
<comment type="function">
    <text evidence="1">Endonuclease that catalyzes the cleavage of RNA on the 3' side of pyrimidine nucleotides. Acts on single-stranded and double-stranded RNA (By similarity).</text>
</comment>
<comment type="catalytic activity">
    <reaction>
        <text>an [RNA] containing cytidine + H2O = an [RNA]-3'-cytidine-3'-phosphate + a 5'-hydroxy-ribonucleotide-3'-[RNA].</text>
        <dbReference type="EC" id="4.6.1.18"/>
    </reaction>
</comment>
<comment type="catalytic activity">
    <reaction>
        <text>an [RNA] containing uridine + H2O = an [RNA]-3'-uridine-3'-phosphate + a 5'-hydroxy-ribonucleotide-3'-[RNA].</text>
        <dbReference type="EC" id="4.6.1.18"/>
    </reaction>
</comment>
<comment type="subunit">
    <text evidence="1">Monomer. Interacts with and forms tight 1:1 complexes with RNH1. Dimerization of two such complexes may occur. Interaction with RNH1 inhibits this protein (By similarity).</text>
</comment>
<comment type="subcellular location">
    <subcellularLocation>
        <location>Secreted</location>
    </subcellularLocation>
</comment>
<comment type="tissue specificity">
    <text>Pancreas.</text>
</comment>
<comment type="similarity">
    <text evidence="2">Belongs to the pancreatic ribonuclease family.</text>
</comment>
<dbReference type="EC" id="4.6.1.18"/>
<dbReference type="EMBL" id="AJ005773">
    <property type="protein sequence ID" value="CAB41486.1"/>
    <property type="molecule type" value="Genomic_DNA"/>
</dbReference>
<dbReference type="SMR" id="Q9WUX6"/>
<dbReference type="GO" id="GO:0005576">
    <property type="term" value="C:extracellular region"/>
    <property type="evidence" value="ECO:0007669"/>
    <property type="project" value="UniProtKB-SubCell"/>
</dbReference>
<dbReference type="GO" id="GO:0016829">
    <property type="term" value="F:lyase activity"/>
    <property type="evidence" value="ECO:0007669"/>
    <property type="project" value="UniProtKB-KW"/>
</dbReference>
<dbReference type="GO" id="GO:0003676">
    <property type="term" value="F:nucleic acid binding"/>
    <property type="evidence" value="ECO:0007669"/>
    <property type="project" value="InterPro"/>
</dbReference>
<dbReference type="GO" id="GO:0004522">
    <property type="term" value="F:ribonuclease A activity"/>
    <property type="evidence" value="ECO:0007669"/>
    <property type="project" value="UniProtKB-EC"/>
</dbReference>
<dbReference type="GO" id="GO:0050830">
    <property type="term" value="P:defense response to Gram-positive bacterium"/>
    <property type="evidence" value="ECO:0007669"/>
    <property type="project" value="TreeGrafter"/>
</dbReference>
<dbReference type="CDD" id="cd06265">
    <property type="entry name" value="RNase_A_canonical"/>
    <property type="match status" value="1"/>
</dbReference>
<dbReference type="FunFam" id="3.10.130.10:FF:000001">
    <property type="entry name" value="Ribonuclease pancreatic"/>
    <property type="match status" value="1"/>
</dbReference>
<dbReference type="Gene3D" id="3.10.130.10">
    <property type="entry name" value="Ribonuclease A-like domain"/>
    <property type="match status" value="1"/>
</dbReference>
<dbReference type="InterPro" id="IPR001427">
    <property type="entry name" value="RNaseA"/>
</dbReference>
<dbReference type="InterPro" id="IPR036816">
    <property type="entry name" value="RNaseA-like_dom_sf"/>
</dbReference>
<dbReference type="InterPro" id="IPR023411">
    <property type="entry name" value="RNaseA_AS"/>
</dbReference>
<dbReference type="InterPro" id="IPR023412">
    <property type="entry name" value="RNaseA_domain"/>
</dbReference>
<dbReference type="PANTHER" id="PTHR11437">
    <property type="entry name" value="RIBONUCLEASE"/>
    <property type="match status" value="1"/>
</dbReference>
<dbReference type="PANTHER" id="PTHR11437:SF24">
    <property type="entry name" value="RIBONUCLEASE PANCREATIC"/>
    <property type="match status" value="1"/>
</dbReference>
<dbReference type="Pfam" id="PF00074">
    <property type="entry name" value="RnaseA"/>
    <property type="match status" value="1"/>
</dbReference>
<dbReference type="PRINTS" id="PR00794">
    <property type="entry name" value="RIBONUCLEASE"/>
</dbReference>
<dbReference type="SMART" id="SM00092">
    <property type="entry name" value="RNAse_Pc"/>
    <property type="match status" value="1"/>
</dbReference>
<dbReference type="SUPFAM" id="SSF54076">
    <property type="entry name" value="RNase A-like"/>
    <property type="match status" value="1"/>
</dbReference>
<dbReference type="PROSITE" id="PS00127">
    <property type="entry name" value="RNASE_PANCREATIC"/>
    <property type="match status" value="1"/>
</dbReference>
<feature type="signal peptide" evidence="1">
    <location>
        <begin position="1"/>
        <end position="25"/>
    </location>
</feature>
<feature type="chain" id="PRO_0000030945" description="Ribonuclease pancreatic">
    <location>
        <begin position="26"/>
        <end position="149"/>
    </location>
</feature>
<feature type="active site" description="Proton acceptor" evidence="1">
    <location>
        <position position="37"/>
    </location>
</feature>
<feature type="active site" description="Proton donor" evidence="1">
    <location>
        <position position="144"/>
    </location>
</feature>
<feature type="binding site" evidence="1">
    <location>
        <position position="32"/>
    </location>
    <ligand>
        <name>substrate</name>
    </ligand>
</feature>
<feature type="binding site" evidence="1">
    <location>
        <position position="35"/>
    </location>
    <ligand>
        <name>substrate</name>
    </ligand>
</feature>
<feature type="binding site" evidence="1">
    <location>
        <begin position="66"/>
        <end position="70"/>
    </location>
    <ligand>
        <name>substrate</name>
    </ligand>
</feature>
<feature type="binding site" evidence="1">
    <location>
        <position position="91"/>
    </location>
    <ligand>
        <name>substrate</name>
    </ligand>
</feature>
<feature type="binding site" evidence="1">
    <location>
        <position position="110"/>
    </location>
    <ligand>
        <name>substrate</name>
    </ligand>
</feature>
<feature type="disulfide bond" evidence="1">
    <location>
        <begin position="51"/>
        <end position="109"/>
    </location>
</feature>
<feature type="disulfide bond" evidence="1">
    <location>
        <begin position="65"/>
        <end position="120"/>
    </location>
</feature>
<feature type="disulfide bond" evidence="1">
    <location>
        <begin position="83"/>
        <end position="135"/>
    </location>
</feature>
<feature type="disulfide bond" evidence="1">
    <location>
        <begin position="90"/>
        <end position="97"/>
    </location>
</feature>
<sequence length="149" mass="16798">MGLEKSLILFPLLVLVLGWVQPSLARESPAMKFERQHMDSDGASSSSSTYCNQMMKRREMTKESCKPVNTFVHEPLADVQAVCSQENVTCKNGKQNCYKSTSALHITDCRLKDNSKYPNCDYKTSQYQKHIIVACEGNPYVPVHFDATV</sequence>
<reference key="1">
    <citation type="journal article" date="1999" name="Mol. Phylogenet. Evol.">
        <title>The phylogenetic position of 'Acomyinae' (Rodentia, Mammalia) as sister group of a Murinae + Gerbillinae clade: evidence from the nuclear ribonuclease gene.</title>
        <authorList>
            <person name="Dubois J.-Y.F."/>
            <person name="Catzeflis F.M."/>
            <person name="Beintema J.J."/>
        </authorList>
    </citation>
    <scope>NUCLEOTIDE SEQUENCE [GENOMIC DNA]</scope>
</reference>
<protein>
    <recommendedName>
        <fullName>Ribonuclease pancreatic</fullName>
        <ecNumber>4.6.1.18</ecNumber>
    </recommendedName>
    <alternativeName>
        <fullName>RNase 1</fullName>
    </alternativeName>
    <alternativeName>
        <fullName>RNase A</fullName>
    </alternativeName>
</protein>
<accession>Q9WUX6</accession>